<reference key="1">
    <citation type="journal article" date="2005" name="J. Bacteriol.">
        <title>Whole-genome sequence analysis of Pseudomonas syringae pv. phaseolicola 1448A reveals divergence among pathovars in genes involved in virulence and transposition.</title>
        <authorList>
            <person name="Joardar V."/>
            <person name="Lindeberg M."/>
            <person name="Jackson R.W."/>
            <person name="Selengut J."/>
            <person name="Dodson R."/>
            <person name="Brinkac L.M."/>
            <person name="Daugherty S.C."/>
            <person name="DeBoy R.T."/>
            <person name="Durkin A.S."/>
            <person name="Gwinn Giglio M."/>
            <person name="Madupu R."/>
            <person name="Nelson W.C."/>
            <person name="Rosovitz M.J."/>
            <person name="Sullivan S.A."/>
            <person name="Crabtree J."/>
            <person name="Creasy T."/>
            <person name="Davidsen T.M."/>
            <person name="Haft D.H."/>
            <person name="Zafar N."/>
            <person name="Zhou L."/>
            <person name="Halpin R."/>
            <person name="Holley T."/>
            <person name="Khouri H.M."/>
            <person name="Feldblyum T.V."/>
            <person name="White O."/>
            <person name="Fraser C.M."/>
            <person name="Chatterjee A.K."/>
            <person name="Cartinhour S."/>
            <person name="Schneider D."/>
            <person name="Mansfield J.W."/>
            <person name="Collmer A."/>
            <person name="Buell R."/>
        </authorList>
    </citation>
    <scope>NUCLEOTIDE SEQUENCE [LARGE SCALE GENOMIC DNA]</scope>
    <source>
        <strain>1448A / Race 6</strain>
    </source>
</reference>
<evidence type="ECO:0000255" key="1">
    <source>
        <dbReference type="HAMAP-Rule" id="MF_01629"/>
    </source>
</evidence>
<organism>
    <name type="scientific">Pseudomonas savastanoi pv. phaseolicola (strain 1448A / Race 6)</name>
    <name type="common">Pseudomonas syringae pv. phaseolicola (strain 1448A / Race 6)</name>
    <dbReference type="NCBI Taxonomy" id="264730"/>
    <lineage>
        <taxon>Bacteria</taxon>
        <taxon>Pseudomonadati</taxon>
        <taxon>Pseudomonadota</taxon>
        <taxon>Gammaproteobacteria</taxon>
        <taxon>Pseudomonadales</taxon>
        <taxon>Pseudomonadaceae</taxon>
        <taxon>Pseudomonas</taxon>
    </lineage>
</organism>
<protein>
    <recommendedName>
        <fullName evidence="1">Pyridoxine/pyridoxamine 5'-phosphate oxidase</fullName>
        <ecNumber evidence="1">1.4.3.5</ecNumber>
    </recommendedName>
    <alternativeName>
        <fullName evidence="1">PNP/PMP oxidase</fullName>
        <shortName evidence="1">PNPOx</shortName>
    </alternativeName>
    <alternativeName>
        <fullName evidence="1">Pyridoxal 5'-phosphate synthase</fullName>
    </alternativeName>
</protein>
<accession>Q48LQ7</accession>
<gene>
    <name evidence="1" type="primary">pdxH</name>
    <name type="ordered locus">PSPPH_1409</name>
</gene>
<sequence length="215" mass="24919">MTQTLADMRRDYTRDGLTEAQSPDEPFALFHTWFDDAVKTEQPPVEANAMTLATVDEQGRPHCRVLLLKGLDTQGFTFFTNYESAKGQQLAARPFAAMTFFWPTLERQVRIEGRVEKVSAQESDAYYQVRPLGSRLGAWASPQSRVIADRDELEGLIRQTEQRFADTQPHCPEHWGGYRLLPERIEFWQGRSSRLHDRLNYRSVDGRWTRERLAP</sequence>
<name>PDXH_PSE14</name>
<keyword id="KW-0285">Flavoprotein</keyword>
<keyword id="KW-0288">FMN</keyword>
<keyword id="KW-0560">Oxidoreductase</keyword>
<keyword id="KW-0664">Pyridoxine biosynthesis</keyword>
<comment type="function">
    <text evidence="1">Catalyzes the oxidation of either pyridoxine 5'-phosphate (PNP) or pyridoxamine 5'-phosphate (PMP) into pyridoxal 5'-phosphate (PLP).</text>
</comment>
<comment type="catalytic activity">
    <reaction evidence="1">
        <text>pyridoxamine 5'-phosphate + O2 + H2O = pyridoxal 5'-phosphate + H2O2 + NH4(+)</text>
        <dbReference type="Rhea" id="RHEA:15817"/>
        <dbReference type="ChEBI" id="CHEBI:15377"/>
        <dbReference type="ChEBI" id="CHEBI:15379"/>
        <dbReference type="ChEBI" id="CHEBI:16240"/>
        <dbReference type="ChEBI" id="CHEBI:28938"/>
        <dbReference type="ChEBI" id="CHEBI:58451"/>
        <dbReference type="ChEBI" id="CHEBI:597326"/>
        <dbReference type="EC" id="1.4.3.5"/>
    </reaction>
</comment>
<comment type="catalytic activity">
    <reaction evidence="1">
        <text>pyridoxine 5'-phosphate + O2 = pyridoxal 5'-phosphate + H2O2</text>
        <dbReference type="Rhea" id="RHEA:15149"/>
        <dbReference type="ChEBI" id="CHEBI:15379"/>
        <dbReference type="ChEBI" id="CHEBI:16240"/>
        <dbReference type="ChEBI" id="CHEBI:58589"/>
        <dbReference type="ChEBI" id="CHEBI:597326"/>
        <dbReference type="EC" id="1.4.3.5"/>
    </reaction>
</comment>
<comment type="cofactor">
    <cofactor evidence="1">
        <name>FMN</name>
        <dbReference type="ChEBI" id="CHEBI:58210"/>
    </cofactor>
    <text evidence="1">Binds 1 FMN per subunit.</text>
</comment>
<comment type="pathway">
    <text evidence="1">Cofactor metabolism; pyridoxal 5'-phosphate salvage; pyridoxal 5'-phosphate from pyridoxamine 5'-phosphate: step 1/1.</text>
</comment>
<comment type="pathway">
    <text evidence="1">Cofactor metabolism; pyridoxal 5'-phosphate salvage; pyridoxal 5'-phosphate from pyridoxine 5'-phosphate: step 1/1.</text>
</comment>
<comment type="subunit">
    <text evidence="1">Homodimer.</text>
</comment>
<comment type="similarity">
    <text evidence="1">Belongs to the pyridoxamine 5'-phosphate oxidase family.</text>
</comment>
<feature type="chain" id="PRO_0000167739" description="Pyridoxine/pyridoxamine 5'-phosphate oxidase">
    <location>
        <begin position="1"/>
        <end position="215"/>
    </location>
</feature>
<feature type="binding site" evidence="1">
    <location>
        <begin position="9"/>
        <end position="12"/>
    </location>
    <ligand>
        <name>substrate</name>
    </ligand>
</feature>
<feature type="binding site" evidence="1">
    <location>
        <begin position="64"/>
        <end position="69"/>
    </location>
    <ligand>
        <name>FMN</name>
        <dbReference type="ChEBI" id="CHEBI:58210"/>
    </ligand>
</feature>
<feature type="binding site" evidence="1">
    <location>
        <position position="69"/>
    </location>
    <ligand>
        <name>substrate</name>
    </ligand>
</feature>
<feature type="binding site" evidence="1">
    <location>
        <begin position="79"/>
        <end position="80"/>
    </location>
    <ligand>
        <name>FMN</name>
        <dbReference type="ChEBI" id="CHEBI:58210"/>
    </ligand>
</feature>
<feature type="binding site" evidence="1">
    <location>
        <position position="86"/>
    </location>
    <ligand>
        <name>FMN</name>
        <dbReference type="ChEBI" id="CHEBI:58210"/>
    </ligand>
</feature>
<feature type="binding site" evidence="1">
    <location>
        <position position="108"/>
    </location>
    <ligand>
        <name>FMN</name>
        <dbReference type="ChEBI" id="CHEBI:58210"/>
    </ligand>
</feature>
<feature type="binding site" evidence="1">
    <location>
        <position position="126"/>
    </location>
    <ligand>
        <name>substrate</name>
    </ligand>
</feature>
<feature type="binding site" evidence="1">
    <location>
        <position position="130"/>
    </location>
    <ligand>
        <name>substrate</name>
    </ligand>
</feature>
<feature type="binding site" evidence="1">
    <location>
        <position position="134"/>
    </location>
    <ligand>
        <name>substrate</name>
    </ligand>
</feature>
<feature type="binding site" evidence="1">
    <location>
        <begin position="143"/>
        <end position="144"/>
    </location>
    <ligand>
        <name>FMN</name>
        <dbReference type="ChEBI" id="CHEBI:58210"/>
    </ligand>
</feature>
<feature type="binding site" evidence="1">
    <location>
        <position position="188"/>
    </location>
    <ligand>
        <name>FMN</name>
        <dbReference type="ChEBI" id="CHEBI:58210"/>
    </ligand>
</feature>
<feature type="binding site" evidence="1">
    <location>
        <begin position="194"/>
        <end position="196"/>
    </location>
    <ligand>
        <name>substrate</name>
    </ligand>
</feature>
<feature type="binding site" evidence="1">
    <location>
        <position position="198"/>
    </location>
    <ligand>
        <name>FMN</name>
        <dbReference type="ChEBI" id="CHEBI:58210"/>
    </ligand>
</feature>
<dbReference type="EC" id="1.4.3.5" evidence="1"/>
<dbReference type="EMBL" id="CP000058">
    <property type="protein sequence ID" value="AAZ33350.1"/>
    <property type="molecule type" value="Genomic_DNA"/>
</dbReference>
<dbReference type="RefSeq" id="WP_004657510.1">
    <property type="nucleotide sequence ID" value="NC_005773.3"/>
</dbReference>
<dbReference type="SMR" id="Q48LQ7"/>
<dbReference type="KEGG" id="psp:PSPPH_1409"/>
<dbReference type="eggNOG" id="COG0259">
    <property type="taxonomic scope" value="Bacteria"/>
</dbReference>
<dbReference type="HOGENOM" id="CLU_032263_2_2_6"/>
<dbReference type="UniPathway" id="UPA01068">
    <property type="reaction ID" value="UER00304"/>
</dbReference>
<dbReference type="UniPathway" id="UPA01068">
    <property type="reaction ID" value="UER00305"/>
</dbReference>
<dbReference type="Proteomes" id="UP000000551">
    <property type="component" value="Chromosome"/>
</dbReference>
<dbReference type="GO" id="GO:0010181">
    <property type="term" value="F:FMN binding"/>
    <property type="evidence" value="ECO:0007669"/>
    <property type="project" value="UniProtKB-UniRule"/>
</dbReference>
<dbReference type="GO" id="GO:0004733">
    <property type="term" value="F:pyridoxamine phosphate oxidase activity"/>
    <property type="evidence" value="ECO:0007669"/>
    <property type="project" value="UniProtKB-UniRule"/>
</dbReference>
<dbReference type="GO" id="GO:0008615">
    <property type="term" value="P:pyridoxine biosynthetic process"/>
    <property type="evidence" value="ECO:0007669"/>
    <property type="project" value="UniProtKB-KW"/>
</dbReference>
<dbReference type="FunFam" id="2.30.110.10:FF:000011">
    <property type="entry name" value="Chromosome 7, whole genome shotgun sequence"/>
    <property type="match status" value="1"/>
</dbReference>
<dbReference type="Gene3D" id="2.30.110.10">
    <property type="entry name" value="Electron Transport, Fmn-binding Protein, Chain A"/>
    <property type="match status" value="1"/>
</dbReference>
<dbReference type="HAMAP" id="MF_01629">
    <property type="entry name" value="PdxH"/>
    <property type="match status" value="1"/>
</dbReference>
<dbReference type="InterPro" id="IPR000659">
    <property type="entry name" value="Pyridox_Oxase"/>
</dbReference>
<dbReference type="InterPro" id="IPR019740">
    <property type="entry name" value="Pyridox_Oxase_CS"/>
</dbReference>
<dbReference type="InterPro" id="IPR011576">
    <property type="entry name" value="Pyridox_Oxase_N"/>
</dbReference>
<dbReference type="InterPro" id="IPR019576">
    <property type="entry name" value="Pyridoxamine_oxidase_dimer_C"/>
</dbReference>
<dbReference type="InterPro" id="IPR012349">
    <property type="entry name" value="Split_barrel_FMN-bd"/>
</dbReference>
<dbReference type="NCBIfam" id="TIGR00558">
    <property type="entry name" value="pdxH"/>
    <property type="match status" value="1"/>
</dbReference>
<dbReference type="NCBIfam" id="NF004231">
    <property type="entry name" value="PRK05679.1"/>
    <property type="match status" value="1"/>
</dbReference>
<dbReference type="PANTHER" id="PTHR10851:SF0">
    <property type="entry name" value="PYRIDOXINE-5'-PHOSPHATE OXIDASE"/>
    <property type="match status" value="1"/>
</dbReference>
<dbReference type="PANTHER" id="PTHR10851">
    <property type="entry name" value="PYRIDOXINE-5-PHOSPHATE OXIDASE"/>
    <property type="match status" value="1"/>
</dbReference>
<dbReference type="Pfam" id="PF10590">
    <property type="entry name" value="PNP_phzG_C"/>
    <property type="match status" value="1"/>
</dbReference>
<dbReference type="Pfam" id="PF01243">
    <property type="entry name" value="PNPOx_N"/>
    <property type="match status" value="1"/>
</dbReference>
<dbReference type="PIRSF" id="PIRSF000190">
    <property type="entry name" value="Pyd_amn-ph_oxd"/>
    <property type="match status" value="1"/>
</dbReference>
<dbReference type="SUPFAM" id="SSF50475">
    <property type="entry name" value="FMN-binding split barrel"/>
    <property type="match status" value="1"/>
</dbReference>
<dbReference type="PROSITE" id="PS01064">
    <property type="entry name" value="PYRIDOX_OXIDASE"/>
    <property type="match status" value="1"/>
</dbReference>
<proteinExistence type="inferred from homology"/>